<evidence type="ECO:0000255" key="1">
    <source>
        <dbReference type="HAMAP-Rule" id="MF_00111"/>
    </source>
</evidence>
<feature type="chain" id="PRO_1000023037" description="UDP-N-acetylglucosamine 1-carboxyvinyltransferase">
    <location>
        <begin position="1"/>
        <end position="420"/>
    </location>
</feature>
<feature type="active site" description="Proton donor" evidence="1">
    <location>
        <position position="118"/>
    </location>
</feature>
<feature type="binding site" evidence="1">
    <location>
        <begin position="22"/>
        <end position="23"/>
    </location>
    <ligand>
        <name>phosphoenolpyruvate</name>
        <dbReference type="ChEBI" id="CHEBI:58702"/>
    </ligand>
</feature>
<feature type="binding site" evidence="1">
    <location>
        <position position="94"/>
    </location>
    <ligand>
        <name>UDP-N-acetyl-alpha-D-glucosamine</name>
        <dbReference type="ChEBI" id="CHEBI:57705"/>
    </ligand>
</feature>
<feature type="binding site" evidence="1">
    <location>
        <position position="307"/>
    </location>
    <ligand>
        <name>UDP-N-acetyl-alpha-D-glucosamine</name>
        <dbReference type="ChEBI" id="CHEBI:57705"/>
    </ligand>
</feature>
<feature type="binding site" evidence="1">
    <location>
        <position position="329"/>
    </location>
    <ligand>
        <name>UDP-N-acetyl-alpha-D-glucosamine</name>
        <dbReference type="ChEBI" id="CHEBI:57705"/>
    </ligand>
</feature>
<feature type="modified residue" description="2-(S-cysteinyl)pyruvic acid O-phosphothioketal" evidence="1">
    <location>
        <position position="118"/>
    </location>
</feature>
<accession>Q0BTB8</accession>
<gene>
    <name evidence="1" type="primary">murA</name>
    <name type="ordered locus">GbCGDNIH1_1036</name>
</gene>
<sequence length="420" mass="44520">MDRIRIRGGHPLAGEIAIGGAKNAALPVMACGLLTDDRLVLNNVPRLADIGTMKALIEQHGIAVERLDPLGRILSLGGQITNTEAPYDIVRKMRASVLVLGPLLARCGEARVSLPGGCAIGTRPVDMHLKGLEQMGAVITLESGYIDARVQGRLRGADIVLPMPSVGATENLLMAASLADGITTLRNAAREPEIEDLAHCLISMGAKIEGIGTGELRIEGVKHLHGAEHSIIPDRIETGSYACAAAITGGRLLLRNARLDHLGAVARTLREAGVEIEEQDSGLLVSRRNGLHGVDVMTEPYPGFPTDMQAQYMVLMSVAEGASMVTETIFENRFMHVPELNRMGARINVHGASAIVRGVSQLSGAPVMATDLRASLSLILAGLAAEGETIVNRVYHLDRGYESVAEKLSACGADIERISG</sequence>
<keyword id="KW-0131">Cell cycle</keyword>
<keyword id="KW-0132">Cell division</keyword>
<keyword id="KW-0133">Cell shape</keyword>
<keyword id="KW-0961">Cell wall biogenesis/degradation</keyword>
<keyword id="KW-0963">Cytoplasm</keyword>
<keyword id="KW-0573">Peptidoglycan synthesis</keyword>
<keyword id="KW-0670">Pyruvate</keyword>
<keyword id="KW-1185">Reference proteome</keyword>
<keyword id="KW-0808">Transferase</keyword>
<comment type="function">
    <text evidence="1">Cell wall formation. Adds enolpyruvyl to UDP-N-acetylglucosamine.</text>
</comment>
<comment type="catalytic activity">
    <reaction evidence="1">
        <text>phosphoenolpyruvate + UDP-N-acetyl-alpha-D-glucosamine = UDP-N-acetyl-3-O-(1-carboxyvinyl)-alpha-D-glucosamine + phosphate</text>
        <dbReference type="Rhea" id="RHEA:18681"/>
        <dbReference type="ChEBI" id="CHEBI:43474"/>
        <dbReference type="ChEBI" id="CHEBI:57705"/>
        <dbReference type="ChEBI" id="CHEBI:58702"/>
        <dbReference type="ChEBI" id="CHEBI:68483"/>
        <dbReference type="EC" id="2.5.1.7"/>
    </reaction>
</comment>
<comment type="pathway">
    <text evidence="1">Cell wall biogenesis; peptidoglycan biosynthesis.</text>
</comment>
<comment type="subcellular location">
    <subcellularLocation>
        <location evidence="1">Cytoplasm</location>
    </subcellularLocation>
</comment>
<comment type="similarity">
    <text evidence="1">Belongs to the EPSP synthase family. MurA subfamily.</text>
</comment>
<dbReference type="EC" id="2.5.1.7" evidence="1"/>
<dbReference type="EMBL" id="CP000394">
    <property type="protein sequence ID" value="ABI61934.1"/>
    <property type="molecule type" value="Genomic_DNA"/>
</dbReference>
<dbReference type="RefSeq" id="WP_011631743.1">
    <property type="nucleotide sequence ID" value="NC_008343.2"/>
</dbReference>
<dbReference type="SMR" id="Q0BTB8"/>
<dbReference type="STRING" id="391165.GbCGDNIH1_1036"/>
<dbReference type="KEGG" id="gbe:GbCGDNIH1_1036"/>
<dbReference type="eggNOG" id="COG0766">
    <property type="taxonomic scope" value="Bacteria"/>
</dbReference>
<dbReference type="HOGENOM" id="CLU_027387_0_0_5"/>
<dbReference type="OrthoDB" id="9803760at2"/>
<dbReference type="UniPathway" id="UPA00219"/>
<dbReference type="Proteomes" id="UP000001963">
    <property type="component" value="Chromosome"/>
</dbReference>
<dbReference type="GO" id="GO:0005737">
    <property type="term" value="C:cytoplasm"/>
    <property type="evidence" value="ECO:0007669"/>
    <property type="project" value="UniProtKB-SubCell"/>
</dbReference>
<dbReference type="GO" id="GO:0008760">
    <property type="term" value="F:UDP-N-acetylglucosamine 1-carboxyvinyltransferase activity"/>
    <property type="evidence" value="ECO:0007669"/>
    <property type="project" value="UniProtKB-UniRule"/>
</dbReference>
<dbReference type="GO" id="GO:0051301">
    <property type="term" value="P:cell division"/>
    <property type="evidence" value="ECO:0007669"/>
    <property type="project" value="UniProtKB-KW"/>
</dbReference>
<dbReference type="GO" id="GO:0071555">
    <property type="term" value="P:cell wall organization"/>
    <property type="evidence" value="ECO:0007669"/>
    <property type="project" value="UniProtKB-KW"/>
</dbReference>
<dbReference type="GO" id="GO:0009252">
    <property type="term" value="P:peptidoglycan biosynthetic process"/>
    <property type="evidence" value="ECO:0007669"/>
    <property type="project" value="UniProtKB-UniRule"/>
</dbReference>
<dbReference type="GO" id="GO:0008360">
    <property type="term" value="P:regulation of cell shape"/>
    <property type="evidence" value="ECO:0007669"/>
    <property type="project" value="UniProtKB-KW"/>
</dbReference>
<dbReference type="GO" id="GO:0019277">
    <property type="term" value="P:UDP-N-acetylgalactosamine biosynthetic process"/>
    <property type="evidence" value="ECO:0007669"/>
    <property type="project" value="InterPro"/>
</dbReference>
<dbReference type="CDD" id="cd01555">
    <property type="entry name" value="UdpNAET"/>
    <property type="match status" value="1"/>
</dbReference>
<dbReference type="FunFam" id="3.65.10.10:FF:000001">
    <property type="entry name" value="UDP-N-acetylglucosamine 1-carboxyvinyltransferase"/>
    <property type="match status" value="1"/>
</dbReference>
<dbReference type="Gene3D" id="3.65.10.10">
    <property type="entry name" value="Enolpyruvate transferase domain"/>
    <property type="match status" value="2"/>
</dbReference>
<dbReference type="HAMAP" id="MF_00111">
    <property type="entry name" value="MurA"/>
    <property type="match status" value="1"/>
</dbReference>
<dbReference type="InterPro" id="IPR001986">
    <property type="entry name" value="Enolpyruvate_Tfrase_dom"/>
</dbReference>
<dbReference type="InterPro" id="IPR036968">
    <property type="entry name" value="Enolpyruvate_Tfrase_sf"/>
</dbReference>
<dbReference type="InterPro" id="IPR050068">
    <property type="entry name" value="MurA_subfamily"/>
</dbReference>
<dbReference type="InterPro" id="IPR013792">
    <property type="entry name" value="RNA3'P_cycl/enolpyr_Trfase_a/b"/>
</dbReference>
<dbReference type="InterPro" id="IPR005750">
    <property type="entry name" value="UDP_GlcNAc_COvinyl_MurA"/>
</dbReference>
<dbReference type="NCBIfam" id="TIGR01072">
    <property type="entry name" value="murA"/>
    <property type="match status" value="1"/>
</dbReference>
<dbReference type="NCBIfam" id="NF006873">
    <property type="entry name" value="PRK09369.1"/>
    <property type="match status" value="1"/>
</dbReference>
<dbReference type="PANTHER" id="PTHR43783">
    <property type="entry name" value="UDP-N-ACETYLGLUCOSAMINE 1-CARBOXYVINYLTRANSFERASE"/>
    <property type="match status" value="1"/>
</dbReference>
<dbReference type="PANTHER" id="PTHR43783:SF1">
    <property type="entry name" value="UDP-N-ACETYLGLUCOSAMINE 1-CARBOXYVINYLTRANSFERASE"/>
    <property type="match status" value="1"/>
</dbReference>
<dbReference type="Pfam" id="PF00275">
    <property type="entry name" value="EPSP_synthase"/>
    <property type="match status" value="1"/>
</dbReference>
<dbReference type="SUPFAM" id="SSF55205">
    <property type="entry name" value="EPT/RTPC-like"/>
    <property type="match status" value="1"/>
</dbReference>
<reference key="1">
    <citation type="journal article" date="2007" name="J. Bacteriol.">
        <title>Genome sequence analysis of the emerging human pathogenic acetic acid bacterium Granulibacter bethesdensis.</title>
        <authorList>
            <person name="Greenberg D.E."/>
            <person name="Porcella S.F."/>
            <person name="Zelazny A.M."/>
            <person name="Virtaneva K."/>
            <person name="Sturdevant D.E."/>
            <person name="Kupko J.J. III"/>
            <person name="Barbian K.D."/>
            <person name="Babar A."/>
            <person name="Dorward D.W."/>
            <person name="Holland S.M."/>
        </authorList>
    </citation>
    <scope>NUCLEOTIDE SEQUENCE [LARGE SCALE GENOMIC DNA]</scope>
    <source>
        <strain>ATCC BAA-1260 / CGDNIH1</strain>
    </source>
</reference>
<name>MURA_GRABC</name>
<organism>
    <name type="scientific">Granulibacter bethesdensis (strain ATCC BAA-1260 / CGDNIH1)</name>
    <dbReference type="NCBI Taxonomy" id="391165"/>
    <lineage>
        <taxon>Bacteria</taxon>
        <taxon>Pseudomonadati</taxon>
        <taxon>Pseudomonadota</taxon>
        <taxon>Alphaproteobacteria</taxon>
        <taxon>Acetobacterales</taxon>
        <taxon>Acetobacteraceae</taxon>
        <taxon>Granulibacter</taxon>
    </lineage>
</organism>
<proteinExistence type="inferred from homology"/>
<protein>
    <recommendedName>
        <fullName evidence="1">UDP-N-acetylglucosamine 1-carboxyvinyltransferase</fullName>
        <ecNumber evidence="1">2.5.1.7</ecNumber>
    </recommendedName>
    <alternativeName>
        <fullName evidence="1">Enoylpyruvate transferase</fullName>
    </alternativeName>
    <alternativeName>
        <fullName evidence="1">UDP-N-acetylglucosamine enolpyruvyl transferase</fullName>
        <shortName evidence="1">EPT</shortName>
    </alternativeName>
</protein>